<protein>
    <recommendedName>
        <fullName evidence="1">Chaperone protein HtpG</fullName>
    </recommendedName>
    <alternativeName>
        <fullName evidence="1">Heat shock protein HtpG</fullName>
    </alternativeName>
    <alternativeName>
        <fullName evidence="1">High temperature protein G</fullName>
    </alternativeName>
</protein>
<keyword id="KW-0067">ATP-binding</keyword>
<keyword id="KW-0143">Chaperone</keyword>
<keyword id="KW-0963">Cytoplasm</keyword>
<keyword id="KW-0547">Nucleotide-binding</keyword>
<keyword id="KW-1185">Reference proteome</keyword>
<keyword id="KW-0346">Stress response</keyword>
<comment type="function">
    <text evidence="1">Molecular chaperone. Has ATPase activity.</text>
</comment>
<comment type="subunit">
    <text evidence="1">Homodimer.</text>
</comment>
<comment type="subcellular location">
    <subcellularLocation>
        <location evidence="1">Cytoplasm</location>
    </subcellularLocation>
</comment>
<comment type="similarity">
    <text evidence="1">Belongs to the heat shock protein 90 family.</text>
</comment>
<name>HTPG_ORITB</name>
<reference key="1">
    <citation type="journal article" date="2007" name="Proc. Natl. Acad. Sci. U.S.A.">
        <title>The Orientia tsutsugamushi genome reveals massive proliferation of conjugative type IV secretion system and host-cell interaction genes.</title>
        <authorList>
            <person name="Cho N.-H."/>
            <person name="Kim H.-R."/>
            <person name="Lee J.-H."/>
            <person name="Kim S.-Y."/>
            <person name="Kim J."/>
            <person name="Cha S."/>
            <person name="Kim S.-Y."/>
            <person name="Darby A.C."/>
            <person name="Fuxelius H.-H."/>
            <person name="Yin J."/>
            <person name="Kim J.H."/>
            <person name="Kim J."/>
            <person name="Lee S.J."/>
            <person name="Koh Y.-S."/>
            <person name="Jang W.-J."/>
            <person name="Park K.-H."/>
            <person name="Andersson S.G.E."/>
            <person name="Choi M.-S."/>
            <person name="Kim I.-S."/>
        </authorList>
    </citation>
    <scope>NUCLEOTIDE SEQUENCE [LARGE SCALE GENOMIC DNA]</scope>
    <source>
        <strain>Boryong</strain>
    </source>
</reference>
<dbReference type="EMBL" id="AM494475">
    <property type="protein sequence ID" value="CAM79622.1"/>
    <property type="molecule type" value="Genomic_DNA"/>
</dbReference>
<dbReference type="RefSeq" id="WP_011944542.1">
    <property type="nucleotide sequence ID" value="NC_009488.1"/>
</dbReference>
<dbReference type="SMR" id="A5CCZ2"/>
<dbReference type="KEGG" id="ots:OTBS_0556"/>
<dbReference type="eggNOG" id="COG0326">
    <property type="taxonomic scope" value="Bacteria"/>
</dbReference>
<dbReference type="HOGENOM" id="CLU_006684_3_0_5"/>
<dbReference type="Proteomes" id="UP000001565">
    <property type="component" value="Chromosome"/>
</dbReference>
<dbReference type="GO" id="GO:0005737">
    <property type="term" value="C:cytoplasm"/>
    <property type="evidence" value="ECO:0007669"/>
    <property type="project" value="UniProtKB-SubCell"/>
</dbReference>
<dbReference type="GO" id="GO:0005524">
    <property type="term" value="F:ATP binding"/>
    <property type="evidence" value="ECO:0007669"/>
    <property type="project" value="UniProtKB-UniRule"/>
</dbReference>
<dbReference type="GO" id="GO:0016887">
    <property type="term" value="F:ATP hydrolysis activity"/>
    <property type="evidence" value="ECO:0007669"/>
    <property type="project" value="InterPro"/>
</dbReference>
<dbReference type="GO" id="GO:0140662">
    <property type="term" value="F:ATP-dependent protein folding chaperone"/>
    <property type="evidence" value="ECO:0007669"/>
    <property type="project" value="InterPro"/>
</dbReference>
<dbReference type="GO" id="GO:0051082">
    <property type="term" value="F:unfolded protein binding"/>
    <property type="evidence" value="ECO:0007669"/>
    <property type="project" value="UniProtKB-UniRule"/>
</dbReference>
<dbReference type="CDD" id="cd16927">
    <property type="entry name" value="HATPase_Hsp90-like"/>
    <property type="match status" value="1"/>
</dbReference>
<dbReference type="FunFam" id="3.30.565.10:FF:000009">
    <property type="entry name" value="Molecular chaperone HtpG"/>
    <property type="match status" value="1"/>
</dbReference>
<dbReference type="Gene3D" id="3.30.230.80">
    <property type="match status" value="1"/>
</dbReference>
<dbReference type="Gene3D" id="3.40.50.11260">
    <property type="match status" value="1"/>
</dbReference>
<dbReference type="Gene3D" id="1.20.120.790">
    <property type="entry name" value="Heat shock protein 90, C-terminal domain"/>
    <property type="match status" value="1"/>
</dbReference>
<dbReference type="Gene3D" id="3.30.565.10">
    <property type="entry name" value="Histidine kinase-like ATPase, C-terminal domain"/>
    <property type="match status" value="1"/>
</dbReference>
<dbReference type="HAMAP" id="MF_00505">
    <property type="entry name" value="HSP90"/>
    <property type="match status" value="1"/>
</dbReference>
<dbReference type="InterPro" id="IPR036890">
    <property type="entry name" value="HATPase_C_sf"/>
</dbReference>
<dbReference type="InterPro" id="IPR037196">
    <property type="entry name" value="HSP90_C"/>
</dbReference>
<dbReference type="InterPro" id="IPR001404">
    <property type="entry name" value="Hsp90_fam"/>
</dbReference>
<dbReference type="InterPro" id="IPR020575">
    <property type="entry name" value="Hsp90_N"/>
</dbReference>
<dbReference type="InterPro" id="IPR020568">
    <property type="entry name" value="Ribosomal_Su5_D2-typ_SF"/>
</dbReference>
<dbReference type="NCBIfam" id="NF003555">
    <property type="entry name" value="PRK05218.1"/>
    <property type="match status" value="1"/>
</dbReference>
<dbReference type="PANTHER" id="PTHR11528">
    <property type="entry name" value="HEAT SHOCK PROTEIN 90 FAMILY MEMBER"/>
    <property type="match status" value="1"/>
</dbReference>
<dbReference type="Pfam" id="PF13589">
    <property type="entry name" value="HATPase_c_3"/>
    <property type="match status" value="1"/>
</dbReference>
<dbReference type="Pfam" id="PF00183">
    <property type="entry name" value="HSP90"/>
    <property type="match status" value="1"/>
</dbReference>
<dbReference type="PIRSF" id="PIRSF002583">
    <property type="entry name" value="Hsp90"/>
    <property type="match status" value="1"/>
</dbReference>
<dbReference type="PRINTS" id="PR00775">
    <property type="entry name" value="HEATSHOCK90"/>
</dbReference>
<dbReference type="SUPFAM" id="SSF55874">
    <property type="entry name" value="ATPase domain of HSP90 chaperone/DNA topoisomerase II/histidine kinase"/>
    <property type="match status" value="1"/>
</dbReference>
<dbReference type="SUPFAM" id="SSF110942">
    <property type="entry name" value="HSP90 C-terminal domain"/>
    <property type="match status" value="1"/>
</dbReference>
<dbReference type="SUPFAM" id="SSF54211">
    <property type="entry name" value="Ribosomal protein S5 domain 2-like"/>
    <property type="match status" value="1"/>
</dbReference>
<gene>
    <name evidence="1" type="primary">htpG</name>
    <name type="ordered locus">OTBS_0556</name>
</gene>
<proteinExistence type="inferred from homology"/>
<feature type="chain" id="PRO_1000014936" description="Chaperone protein HtpG">
    <location>
        <begin position="1"/>
        <end position="630"/>
    </location>
</feature>
<feature type="region of interest" description="A; substrate-binding" evidence="1">
    <location>
        <begin position="1"/>
        <end position="327"/>
    </location>
</feature>
<feature type="region of interest" description="B" evidence="1">
    <location>
        <begin position="328"/>
        <end position="551"/>
    </location>
</feature>
<feature type="region of interest" description="Disordered" evidence="2">
    <location>
        <begin position="483"/>
        <end position="504"/>
    </location>
</feature>
<feature type="region of interest" description="C" evidence="1">
    <location>
        <begin position="552"/>
        <end position="630"/>
    </location>
</feature>
<feature type="compositionally biased region" description="Basic and acidic residues" evidence="2">
    <location>
        <begin position="483"/>
        <end position="499"/>
    </location>
</feature>
<organism>
    <name type="scientific">Orientia tsutsugamushi (strain Boryong)</name>
    <name type="common">Rickettsia tsutsugamushi</name>
    <dbReference type="NCBI Taxonomy" id="357244"/>
    <lineage>
        <taxon>Bacteria</taxon>
        <taxon>Pseudomonadati</taxon>
        <taxon>Pseudomonadota</taxon>
        <taxon>Alphaproteobacteria</taxon>
        <taxon>Rickettsiales</taxon>
        <taxon>Rickettsiaceae</taxon>
        <taxon>Rickettsieae</taxon>
        <taxon>Orientia</taxon>
    </lineage>
</organism>
<sequence length="630" mass="72148">MSVETYKFDAEVGKVLHLVIHTLYTNKKIFLRELISNASDACDKLRYLSQSNAELLQGESDFKITVSMDKEKRYIILQDNGIGMNKEDLTQNLGTIASSGTQKFLEQLGNDAKKDNMLIGQFGVGFYSSYMVADEVKVISKKAGEAQAYQWSSKGEGEYYIEDCEADFIRGTKITLHIKPEYDNYLDHFQIKDIIKTYSDHISVPIYYVGVDGKEQQVNSSSALWTRSKSDITDEQYEEFYRNIAYAIDKPWVTIHNKSEGVIEFTNLLFIPSSKTFDLFHPDRKSRVKLYIKKVFITDENVALIPKYMRFLRGVVDSEDLSLNISRETLQHSPLIDKIQASITKRVITELEKQKTKDQGEYETFWNNFGAVLKEGLCEGTADVDKLLKICLFRSALQDKFISLDEYIANLKSEQKNIYYITGDDLEALKSSPQIEGLLSRNIDVLLLTDDVDKFWVMVTRKYNDYVLKSVTSANIEIDNCDTKTAKSSDTNNDGKDDTSSSDDQNCEQLIKYFKEVLGDKVKSVEVSKKLTRSPVCLTVPEGSMDIRTERFLIEQKQLSSHSSKILEINPNHTIIKKINENIKLNQNLDVNKQLVMTLLDQSYLIEGQPIPDLQDYCNRINFFIEKSVN</sequence>
<accession>A5CCZ2</accession>
<evidence type="ECO:0000255" key="1">
    <source>
        <dbReference type="HAMAP-Rule" id="MF_00505"/>
    </source>
</evidence>
<evidence type="ECO:0000256" key="2">
    <source>
        <dbReference type="SAM" id="MobiDB-lite"/>
    </source>
</evidence>